<sequence length="89" mass="10561">MYLDSAKKAELFEKYGKSVKDTGSPESQIALFTFRIAHLTEHLRQNKKDFATERSLKMLVGKRRRMLDYLIKVDIERYRAIIKELGIRR</sequence>
<evidence type="ECO:0000255" key="1">
    <source>
        <dbReference type="HAMAP-Rule" id="MF_01343"/>
    </source>
</evidence>
<evidence type="ECO:0000305" key="2"/>
<protein>
    <recommendedName>
        <fullName evidence="1">Small ribosomal subunit protein uS15</fullName>
    </recommendedName>
    <alternativeName>
        <fullName evidence="2">30S ribosomal protein S15</fullName>
    </alternativeName>
</protein>
<reference key="1">
    <citation type="journal article" date="2008" name="DNA Res.">
        <title>Determination of the genome sequence of Porphyromonas gingivalis strain ATCC 33277 and genomic comparison with strain W83 revealed extensive genome rearrangements in P. gingivalis.</title>
        <authorList>
            <person name="Naito M."/>
            <person name="Hirakawa H."/>
            <person name="Yamashita A."/>
            <person name="Ohara N."/>
            <person name="Shoji M."/>
            <person name="Yukitake H."/>
            <person name="Nakayama K."/>
            <person name="Toh H."/>
            <person name="Yoshimura F."/>
            <person name="Kuhara S."/>
            <person name="Hattori M."/>
            <person name="Hayashi T."/>
            <person name="Nakayama K."/>
        </authorList>
    </citation>
    <scope>NUCLEOTIDE SEQUENCE [LARGE SCALE GENOMIC DNA]</scope>
    <source>
        <strain>ATCC 33277 / DSM 20709 / CIP 103683 / JCM 12257 / NCTC 11834 / 2561</strain>
    </source>
</reference>
<feature type="chain" id="PRO_1000143151" description="Small ribosomal subunit protein uS15">
    <location>
        <begin position="1"/>
        <end position="89"/>
    </location>
</feature>
<keyword id="KW-0687">Ribonucleoprotein</keyword>
<keyword id="KW-0689">Ribosomal protein</keyword>
<keyword id="KW-0694">RNA-binding</keyword>
<keyword id="KW-0699">rRNA-binding</keyword>
<accession>B2RLH2</accession>
<organism>
    <name type="scientific">Porphyromonas gingivalis (strain ATCC 33277 / DSM 20709 / CIP 103683 / JCM 12257 / NCTC 11834 / 2561)</name>
    <dbReference type="NCBI Taxonomy" id="431947"/>
    <lineage>
        <taxon>Bacteria</taxon>
        <taxon>Pseudomonadati</taxon>
        <taxon>Bacteroidota</taxon>
        <taxon>Bacteroidia</taxon>
        <taxon>Bacteroidales</taxon>
        <taxon>Porphyromonadaceae</taxon>
        <taxon>Porphyromonas</taxon>
    </lineage>
</organism>
<name>RS15_PORG3</name>
<dbReference type="EMBL" id="AP009380">
    <property type="protein sequence ID" value="BAG34217.1"/>
    <property type="molecule type" value="Genomic_DNA"/>
</dbReference>
<dbReference type="RefSeq" id="WP_004584741.1">
    <property type="nucleotide sequence ID" value="NZ_CP025930.1"/>
</dbReference>
<dbReference type="SMR" id="B2RLH2"/>
<dbReference type="GeneID" id="57240457"/>
<dbReference type="KEGG" id="pgn:PGN_1698"/>
<dbReference type="eggNOG" id="COG0184">
    <property type="taxonomic scope" value="Bacteria"/>
</dbReference>
<dbReference type="HOGENOM" id="CLU_148518_0_1_10"/>
<dbReference type="OrthoDB" id="9799262at2"/>
<dbReference type="BioCyc" id="PGIN431947:G1G2V-1905-MONOMER"/>
<dbReference type="Proteomes" id="UP000008842">
    <property type="component" value="Chromosome"/>
</dbReference>
<dbReference type="GO" id="GO:0022627">
    <property type="term" value="C:cytosolic small ribosomal subunit"/>
    <property type="evidence" value="ECO:0007669"/>
    <property type="project" value="TreeGrafter"/>
</dbReference>
<dbReference type="GO" id="GO:0019843">
    <property type="term" value="F:rRNA binding"/>
    <property type="evidence" value="ECO:0007669"/>
    <property type="project" value="UniProtKB-UniRule"/>
</dbReference>
<dbReference type="GO" id="GO:0003735">
    <property type="term" value="F:structural constituent of ribosome"/>
    <property type="evidence" value="ECO:0007669"/>
    <property type="project" value="InterPro"/>
</dbReference>
<dbReference type="GO" id="GO:0006412">
    <property type="term" value="P:translation"/>
    <property type="evidence" value="ECO:0007669"/>
    <property type="project" value="UniProtKB-UniRule"/>
</dbReference>
<dbReference type="CDD" id="cd00353">
    <property type="entry name" value="Ribosomal_S15p_S13e"/>
    <property type="match status" value="1"/>
</dbReference>
<dbReference type="FunFam" id="1.10.287.10:FF:000002">
    <property type="entry name" value="30S ribosomal protein S15"/>
    <property type="match status" value="1"/>
</dbReference>
<dbReference type="Gene3D" id="6.10.250.3130">
    <property type="match status" value="1"/>
</dbReference>
<dbReference type="Gene3D" id="1.10.287.10">
    <property type="entry name" value="S15/NS1, RNA-binding"/>
    <property type="match status" value="1"/>
</dbReference>
<dbReference type="HAMAP" id="MF_01343_B">
    <property type="entry name" value="Ribosomal_uS15_B"/>
    <property type="match status" value="1"/>
</dbReference>
<dbReference type="InterPro" id="IPR000589">
    <property type="entry name" value="Ribosomal_uS15"/>
</dbReference>
<dbReference type="InterPro" id="IPR005290">
    <property type="entry name" value="Ribosomal_uS15_bac-type"/>
</dbReference>
<dbReference type="InterPro" id="IPR009068">
    <property type="entry name" value="uS15_NS1_RNA-bd_sf"/>
</dbReference>
<dbReference type="NCBIfam" id="TIGR00952">
    <property type="entry name" value="S15_bact"/>
    <property type="match status" value="1"/>
</dbReference>
<dbReference type="PANTHER" id="PTHR23321">
    <property type="entry name" value="RIBOSOMAL PROTEIN S15, BACTERIAL AND ORGANELLAR"/>
    <property type="match status" value="1"/>
</dbReference>
<dbReference type="PANTHER" id="PTHR23321:SF26">
    <property type="entry name" value="SMALL RIBOSOMAL SUBUNIT PROTEIN US15M"/>
    <property type="match status" value="1"/>
</dbReference>
<dbReference type="Pfam" id="PF00312">
    <property type="entry name" value="Ribosomal_S15"/>
    <property type="match status" value="1"/>
</dbReference>
<dbReference type="SMART" id="SM01387">
    <property type="entry name" value="Ribosomal_S15"/>
    <property type="match status" value="1"/>
</dbReference>
<dbReference type="SUPFAM" id="SSF47060">
    <property type="entry name" value="S15/NS1 RNA-binding domain"/>
    <property type="match status" value="1"/>
</dbReference>
<dbReference type="PROSITE" id="PS00362">
    <property type="entry name" value="RIBOSOMAL_S15"/>
    <property type="match status" value="1"/>
</dbReference>
<gene>
    <name evidence="1" type="primary">rpsO</name>
    <name type="ordered locus">PGN_1698</name>
</gene>
<comment type="function">
    <text evidence="1">One of the primary rRNA binding proteins, it binds directly to 16S rRNA where it helps nucleate assembly of the platform of the 30S subunit by binding and bridging several RNA helices of the 16S rRNA.</text>
</comment>
<comment type="function">
    <text evidence="1">Forms an intersubunit bridge (bridge B4) with the 23S rRNA of the 50S subunit in the ribosome.</text>
</comment>
<comment type="subunit">
    <text evidence="1">Part of the 30S ribosomal subunit. Forms a bridge to the 50S subunit in the 70S ribosome, contacting the 23S rRNA.</text>
</comment>
<comment type="similarity">
    <text evidence="1">Belongs to the universal ribosomal protein uS15 family.</text>
</comment>
<proteinExistence type="inferred from homology"/>